<dbReference type="EC" id="3.1.21.10" evidence="1"/>
<dbReference type="EMBL" id="FM180568">
    <property type="protein sequence ID" value="CAS09536.1"/>
    <property type="molecule type" value="Genomic_DNA"/>
</dbReference>
<dbReference type="RefSeq" id="WP_001295503.1">
    <property type="nucleotide sequence ID" value="NC_011601.1"/>
</dbReference>
<dbReference type="SMR" id="B7USP0"/>
<dbReference type="GeneID" id="89516631"/>
<dbReference type="KEGG" id="ecg:E2348C_1988"/>
<dbReference type="HOGENOM" id="CLU_091257_2_1_6"/>
<dbReference type="Proteomes" id="UP000008205">
    <property type="component" value="Chromosome"/>
</dbReference>
<dbReference type="GO" id="GO:0005737">
    <property type="term" value="C:cytoplasm"/>
    <property type="evidence" value="ECO:0007669"/>
    <property type="project" value="UniProtKB-SubCell"/>
</dbReference>
<dbReference type="GO" id="GO:0048476">
    <property type="term" value="C:Holliday junction resolvase complex"/>
    <property type="evidence" value="ECO:0007669"/>
    <property type="project" value="UniProtKB-UniRule"/>
</dbReference>
<dbReference type="GO" id="GO:0008821">
    <property type="term" value="F:crossover junction DNA endonuclease activity"/>
    <property type="evidence" value="ECO:0007669"/>
    <property type="project" value="UniProtKB-UniRule"/>
</dbReference>
<dbReference type="GO" id="GO:0003677">
    <property type="term" value="F:DNA binding"/>
    <property type="evidence" value="ECO:0007669"/>
    <property type="project" value="UniProtKB-KW"/>
</dbReference>
<dbReference type="GO" id="GO:0000287">
    <property type="term" value="F:magnesium ion binding"/>
    <property type="evidence" value="ECO:0007669"/>
    <property type="project" value="UniProtKB-UniRule"/>
</dbReference>
<dbReference type="GO" id="GO:0006310">
    <property type="term" value="P:DNA recombination"/>
    <property type="evidence" value="ECO:0007669"/>
    <property type="project" value="UniProtKB-UniRule"/>
</dbReference>
<dbReference type="GO" id="GO:0006281">
    <property type="term" value="P:DNA repair"/>
    <property type="evidence" value="ECO:0007669"/>
    <property type="project" value="UniProtKB-UniRule"/>
</dbReference>
<dbReference type="CDD" id="cd16962">
    <property type="entry name" value="RuvC"/>
    <property type="match status" value="1"/>
</dbReference>
<dbReference type="FunFam" id="3.30.420.10:FF:000002">
    <property type="entry name" value="Crossover junction endodeoxyribonuclease RuvC"/>
    <property type="match status" value="1"/>
</dbReference>
<dbReference type="Gene3D" id="3.30.420.10">
    <property type="entry name" value="Ribonuclease H-like superfamily/Ribonuclease H"/>
    <property type="match status" value="1"/>
</dbReference>
<dbReference type="HAMAP" id="MF_00034">
    <property type="entry name" value="RuvC"/>
    <property type="match status" value="1"/>
</dbReference>
<dbReference type="InterPro" id="IPR012337">
    <property type="entry name" value="RNaseH-like_sf"/>
</dbReference>
<dbReference type="InterPro" id="IPR036397">
    <property type="entry name" value="RNaseH_sf"/>
</dbReference>
<dbReference type="InterPro" id="IPR020563">
    <property type="entry name" value="X-over_junc_endoDNase_Mg_BS"/>
</dbReference>
<dbReference type="InterPro" id="IPR002176">
    <property type="entry name" value="X-over_junc_endoDNase_RuvC"/>
</dbReference>
<dbReference type="NCBIfam" id="NF000711">
    <property type="entry name" value="PRK00039.2-1"/>
    <property type="match status" value="1"/>
</dbReference>
<dbReference type="NCBIfam" id="TIGR00228">
    <property type="entry name" value="ruvC"/>
    <property type="match status" value="1"/>
</dbReference>
<dbReference type="PANTHER" id="PTHR30194">
    <property type="entry name" value="CROSSOVER JUNCTION ENDODEOXYRIBONUCLEASE RUVC"/>
    <property type="match status" value="1"/>
</dbReference>
<dbReference type="PANTHER" id="PTHR30194:SF3">
    <property type="entry name" value="CROSSOVER JUNCTION ENDODEOXYRIBONUCLEASE RUVC"/>
    <property type="match status" value="1"/>
</dbReference>
<dbReference type="Pfam" id="PF02075">
    <property type="entry name" value="RuvC"/>
    <property type="match status" value="1"/>
</dbReference>
<dbReference type="PRINTS" id="PR00696">
    <property type="entry name" value="RSOLVASERUVC"/>
</dbReference>
<dbReference type="SUPFAM" id="SSF53098">
    <property type="entry name" value="Ribonuclease H-like"/>
    <property type="match status" value="1"/>
</dbReference>
<dbReference type="PROSITE" id="PS01321">
    <property type="entry name" value="RUVC"/>
    <property type="match status" value="1"/>
</dbReference>
<name>RUVC_ECO27</name>
<sequence length="173" mass="18747">MAIILGIDPGSRVTGYGVIRQVGRQLSYLGSGCIRTKVDDLPSRLKLIYAGVTEIITQFQPDYFAIEQVFMAKNADSALKLGQARGVAIVAAVNQELPVFEYAARQVKQTVVGIGSAEKSQVQHMVRTLLKLPANPQADAADALAIAITHCHVSQNAMQMSESRLNLARGRLR</sequence>
<feature type="chain" id="PRO_1000195252" description="Crossover junction endodeoxyribonuclease RuvC">
    <location>
        <begin position="1"/>
        <end position="173"/>
    </location>
</feature>
<feature type="active site" evidence="1">
    <location>
        <position position="8"/>
    </location>
</feature>
<feature type="active site" evidence="1">
    <location>
        <position position="67"/>
    </location>
</feature>
<feature type="active site" evidence="1">
    <location>
        <position position="139"/>
    </location>
</feature>
<feature type="binding site" evidence="1">
    <location>
        <position position="8"/>
    </location>
    <ligand>
        <name>Mg(2+)</name>
        <dbReference type="ChEBI" id="CHEBI:18420"/>
        <label>1</label>
    </ligand>
</feature>
<feature type="binding site" evidence="1">
    <location>
        <position position="67"/>
    </location>
    <ligand>
        <name>Mg(2+)</name>
        <dbReference type="ChEBI" id="CHEBI:18420"/>
        <label>2</label>
    </ligand>
</feature>
<feature type="binding site" evidence="1">
    <location>
        <position position="139"/>
    </location>
    <ligand>
        <name>Mg(2+)</name>
        <dbReference type="ChEBI" id="CHEBI:18420"/>
        <label>1</label>
    </ligand>
</feature>
<accession>B7USP0</accession>
<organism>
    <name type="scientific">Escherichia coli O127:H6 (strain E2348/69 / EPEC)</name>
    <dbReference type="NCBI Taxonomy" id="574521"/>
    <lineage>
        <taxon>Bacteria</taxon>
        <taxon>Pseudomonadati</taxon>
        <taxon>Pseudomonadota</taxon>
        <taxon>Gammaproteobacteria</taxon>
        <taxon>Enterobacterales</taxon>
        <taxon>Enterobacteriaceae</taxon>
        <taxon>Escherichia</taxon>
    </lineage>
</organism>
<protein>
    <recommendedName>
        <fullName evidence="1">Crossover junction endodeoxyribonuclease RuvC</fullName>
        <ecNumber evidence="1">3.1.21.10</ecNumber>
    </recommendedName>
    <alternativeName>
        <fullName evidence="1">Holliday junction nuclease RuvC</fullName>
    </alternativeName>
    <alternativeName>
        <fullName evidence="1">Holliday junction resolvase RuvC</fullName>
    </alternativeName>
</protein>
<evidence type="ECO:0000255" key="1">
    <source>
        <dbReference type="HAMAP-Rule" id="MF_00034"/>
    </source>
</evidence>
<evidence type="ECO:0000269" key="2">
    <source>
    </source>
</evidence>
<keyword id="KW-0963">Cytoplasm</keyword>
<keyword id="KW-0227">DNA damage</keyword>
<keyword id="KW-0233">DNA recombination</keyword>
<keyword id="KW-0234">DNA repair</keyword>
<keyword id="KW-0238">DNA-binding</keyword>
<keyword id="KW-0255">Endonuclease</keyword>
<keyword id="KW-0378">Hydrolase</keyword>
<keyword id="KW-0460">Magnesium</keyword>
<keyword id="KW-0479">Metal-binding</keyword>
<keyword id="KW-0540">Nuclease</keyword>
<keyword id="KW-1185">Reference proteome</keyword>
<comment type="function">
    <text evidence="1">The RuvA-RuvB-RuvC complex processes Holliday junction (HJ) DNA during genetic recombination and DNA repair. Endonuclease that resolves HJ intermediates. Cleaves cruciform DNA by making single-stranded nicks across the HJ at symmetrical positions within the homologous arms, yielding a 5'-phosphate and a 3'-hydroxyl group; requires a central core of homology in the junction. The consensus cleavage sequence is 5'-(A/T)TT(C/G)-3'. Cleavage occurs on the 3'-side of the TT dinucleotide at the point of strand exchange. HJ branch migration catalyzed by RuvA-RuvB allows RuvC to scan DNA until it finds its consensus sequence, where it cleaves and resolves the cruciform DNA.</text>
</comment>
<comment type="function">
    <text evidence="2">Plays a role in recovery after DNA ADP-ribosylation, probably via replication fork reversal.</text>
</comment>
<comment type="catalytic activity">
    <reaction evidence="1">
        <text>Endonucleolytic cleavage at a junction such as a reciprocal single-stranded crossover between two homologous DNA duplexes (Holliday junction).</text>
        <dbReference type="EC" id="3.1.21.10"/>
    </reaction>
</comment>
<comment type="cofactor">
    <cofactor evidence="1">
        <name>Mg(2+)</name>
        <dbReference type="ChEBI" id="CHEBI:18420"/>
    </cofactor>
    <text evidence="1">Binds 2 Mg(2+) ion per subunit.</text>
</comment>
<comment type="subunit">
    <text evidence="1">Homodimer which binds Holliday junction (HJ) DNA. The HJ becomes 2-fold symmetrical on binding to RuvC with unstacked arms; it has a different conformation from HJ DNA in complex with RuvA. In the full resolvosome a probable DNA-RuvA(4)-RuvB(12)-RuvC(2) complex forms which resolves the HJ.</text>
</comment>
<comment type="subcellular location">
    <subcellularLocation>
        <location evidence="1">Cytoplasm</location>
    </subcellularLocation>
</comment>
<comment type="disruption phenotype">
    <text evidence="2">Significantly reduced survival of cells expressing DNA ADP-ribosyl transferase (darT) mutant G49D.</text>
</comment>
<comment type="similarity">
    <text evidence="1">Belongs to the RuvC family.</text>
</comment>
<proteinExistence type="inferred from homology"/>
<reference key="1">
    <citation type="journal article" date="2009" name="J. Bacteriol.">
        <title>Complete genome sequence and comparative genome analysis of enteropathogenic Escherichia coli O127:H6 strain E2348/69.</title>
        <authorList>
            <person name="Iguchi A."/>
            <person name="Thomson N.R."/>
            <person name="Ogura Y."/>
            <person name="Saunders D."/>
            <person name="Ooka T."/>
            <person name="Henderson I.R."/>
            <person name="Harris D."/>
            <person name="Asadulghani M."/>
            <person name="Kurokawa K."/>
            <person name="Dean P."/>
            <person name="Kenny B."/>
            <person name="Quail M.A."/>
            <person name="Thurston S."/>
            <person name="Dougan G."/>
            <person name="Hayashi T."/>
            <person name="Parkhill J."/>
            <person name="Frankel G."/>
        </authorList>
    </citation>
    <scope>NUCLEOTIDE SEQUENCE [LARGE SCALE GENOMIC DNA]</scope>
    <source>
        <strain>E2348/69 / EPEC</strain>
    </source>
</reference>
<reference key="2">
    <citation type="journal article" date="2020" name="Cell Rep.">
        <title>DNA ADP-Ribosylation Stalls Replication and Is Reversed by RecF-Mediated Homologous Recombination and Nucleotide Excision Repair.</title>
        <authorList>
            <person name="Lawaree E."/>
            <person name="Jankevicius G."/>
            <person name="Cooper C."/>
            <person name="Ahel I."/>
            <person name="Uphoff S."/>
            <person name="Tang C.M."/>
        </authorList>
    </citation>
    <scope>FUNCTION</scope>
    <scope>DISRUPTION PHENOTYPE</scope>
    <source>
        <strain>E2348/69 / EPEC</strain>
    </source>
</reference>
<gene>
    <name evidence="1" type="primary">ruvC</name>
    <name type="ordered locus">E2348C_1988</name>
</gene>